<proteinExistence type="inferred from homology"/>
<feature type="signal peptide" evidence="2">
    <location>
        <begin position="1"/>
        <end position="19"/>
    </location>
</feature>
<feature type="chain" id="PRO_0000393167" description="Probable endo-1,4-beta-xylanase B">
    <location>
        <begin position="20"/>
        <end position="221"/>
    </location>
</feature>
<feature type="domain" description="GH11" evidence="3">
    <location>
        <begin position="33"/>
        <end position="221"/>
    </location>
</feature>
<feature type="active site" description="Nucleophile" evidence="4">
    <location>
        <position position="117"/>
    </location>
</feature>
<feature type="active site" description="Proton donor" evidence="1">
    <location>
        <position position="208"/>
    </location>
</feature>
<dbReference type="EC" id="3.2.1.8"/>
<dbReference type="EMBL" id="EQ963479">
    <property type="protein sequence ID" value="EED49697.1"/>
    <property type="molecule type" value="Genomic_DNA"/>
</dbReference>
<dbReference type="RefSeq" id="XP_002380078.1">
    <property type="nucleotide sequence ID" value="XM_002380037.1"/>
</dbReference>
<dbReference type="SMR" id="B8NJ86"/>
<dbReference type="STRING" id="332952.B8NJ86"/>
<dbReference type="EnsemblFungi" id="EED49697">
    <property type="protein sequence ID" value="EED49697"/>
    <property type="gene ID" value="AFLA_065190"/>
</dbReference>
<dbReference type="VEuPathDB" id="FungiDB:AFLA_008447"/>
<dbReference type="eggNOG" id="ENOG502RXA7">
    <property type="taxonomic scope" value="Eukaryota"/>
</dbReference>
<dbReference type="HOGENOM" id="CLU_052631_0_0_1"/>
<dbReference type="OMA" id="VDWTNCG"/>
<dbReference type="BRENDA" id="3.2.1.8">
    <property type="organism ID" value="506"/>
</dbReference>
<dbReference type="UniPathway" id="UPA00114"/>
<dbReference type="GO" id="GO:0005576">
    <property type="term" value="C:extracellular region"/>
    <property type="evidence" value="ECO:0000250"/>
    <property type="project" value="UniProtKB"/>
</dbReference>
<dbReference type="GO" id="GO:0031176">
    <property type="term" value="F:endo-1,4-beta-xylanase activity"/>
    <property type="evidence" value="ECO:0000250"/>
    <property type="project" value="UniProtKB"/>
</dbReference>
<dbReference type="GO" id="GO:0045493">
    <property type="term" value="P:xylan catabolic process"/>
    <property type="evidence" value="ECO:0000250"/>
    <property type="project" value="UniProtKB"/>
</dbReference>
<dbReference type="FunFam" id="2.60.120.180:FF:000001">
    <property type="entry name" value="Endo-1,4-beta-xylanase"/>
    <property type="match status" value="1"/>
</dbReference>
<dbReference type="Gene3D" id="2.60.120.180">
    <property type="match status" value="1"/>
</dbReference>
<dbReference type="InterPro" id="IPR013320">
    <property type="entry name" value="ConA-like_dom_sf"/>
</dbReference>
<dbReference type="InterPro" id="IPR013319">
    <property type="entry name" value="GH11/12"/>
</dbReference>
<dbReference type="InterPro" id="IPR018208">
    <property type="entry name" value="GH11_AS_1"/>
</dbReference>
<dbReference type="InterPro" id="IPR033123">
    <property type="entry name" value="GH11_dom"/>
</dbReference>
<dbReference type="InterPro" id="IPR001137">
    <property type="entry name" value="Glyco_hydro_11"/>
</dbReference>
<dbReference type="PANTHER" id="PTHR46828">
    <property type="entry name" value="ENDO-1,4-BETA-XYLANASE A-RELATED"/>
    <property type="match status" value="1"/>
</dbReference>
<dbReference type="PANTHER" id="PTHR46828:SF2">
    <property type="entry name" value="ENDO-1,4-BETA-XYLANASE A-RELATED"/>
    <property type="match status" value="1"/>
</dbReference>
<dbReference type="Pfam" id="PF00457">
    <property type="entry name" value="Glyco_hydro_11"/>
    <property type="match status" value="1"/>
</dbReference>
<dbReference type="PRINTS" id="PR00911">
    <property type="entry name" value="GLHYDRLASE11"/>
</dbReference>
<dbReference type="SUPFAM" id="SSF49899">
    <property type="entry name" value="Concanavalin A-like lectins/glucanases"/>
    <property type="match status" value="1"/>
</dbReference>
<dbReference type="PROSITE" id="PS00776">
    <property type="entry name" value="GH11_1"/>
    <property type="match status" value="1"/>
</dbReference>
<dbReference type="PROSITE" id="PS51761">
    <property type="entry name" value="GH11_3"/>
    <property type="match status" value="1"/>
</dbReference>
<keyword id="KW-0119">Carbohydrate metabolism</keyword>
<keyword id="KW-0326">Glycosidase</keyword>
<keyword id="KW-0378">Hydrolase</keyword>
<keyword id="KW-0624">Polysaccharide degradation</keyword>
<keyword id="KW-0964">Secreted</keyword>
<keyword id="KW-0732">Signal</keyword>
<keyword id="KW-0858">Xylan degradation</keyword>
<name>XYNB_ASPFN</name>
<evidence type="ECO:0000250" key="1"/>
<evidence type="ECO:0000255" key="2"/>
<evidence type="ECO:0000255" key="3">
    <source>
        <dbReference type="PROSITE-ProRule" id="PRU01097"/>
    </source>
</evidence>
<evidence type="ECO:0000255" key="4">
    <source>
        <dbReference type="PROSITE-ProRule" id="PRU10062"/>
    </source>
</evidence>
<evidence type="ECO:0000305" key="5"/>
<gene>
    <name type="primary">xlnB</name>
    <name type="synonym">xynB</name>
    <name type="synonym">xynG1</name>
    <name type="ORF">AFLA_065190</name>
</gene>
<accession>B8NJ86</accession>
<organism>
    <name type="scientific">Aspergillus flavus (strain ATCC 200026 / FGSC A1120 / IAM 13836 / NRRL 3357 / JCM 12722 / SRRC 167)</name>
    <dbReference type="NCBI Taxonomy" id="332952"/>
    <lineage>
        <taxon>Eukaryota</taxon>
        <taxon>Fungi</taxon>
        <taxon>Dikarya</taxon>
        <taxon>Ascomycota</taxon>
        <taxon>Pezizomycotina</taxon>
        <taxon>Eurotiomycetes</taxon>
        <taxon>Eurotiomycetidae</taxon>
        <taxon>Eurotiales</taxon>
        <taxon>Aspergillaceae</taxon>
        <taxon>Aspergillus</taxon>
        <taxon>Aspergillus subgen. Circumdati</taxon>
    </lineage>
</organism>
<protein>
    <recommendedName>
        <fullName>Probable endo-1,4-beta-xylanase B</fullName>
        <shortName>Xylanase B</shortName>
        <ecNumber>3.2.1.8</ecNumber>
    </recommendedName>
    <alternativeName>
        <fullName>1,4-beta-D-xylan xylanohydrolase B</fullName>
    </alternativeName>
    <alternativeName>
        <fullName>Endo-1,4-beta-xylanase G1</fullName>
        <shortName>Xylanase G1</shortName>
    </alternativeName>
</protein>
<sequence>MVSFSSLLLAVSAVSGALAAPGDSTLVELAKRAITSSETGTNNGYYYSFWTNGGGDVEYTNGNGGQYSVKWTNCDNFVAGKGWNPGSAKTVTYSGEWESNSNSYVSLYGWTQNPLVEYYIVDKYGDYDPSTGATELGTVESDGGTYKIYKTTRENAPSIEGTSTFNQYWSVRQSGRVGGTITAQNHFDAWANVGLQLGTHNYMILATEGYKSSGSATITVE</sequence>
<reference key="1">
    <citation type="journal article" date="2015" name="Genome Announc.">
        <title>Genome sequence of Aspergillus flavus NRRL 3357, a strain that causes aflatoxin contamination of food and feed.</title>
        <authorList>
            <person name="Nierman W.C."/>
            <person name="Yu J."/>
            <person name="Fedorova-Abrams N.D."/>
            <person name="Losada L."/>
            <person name="Cleveland T.E."/>
            <person name="Bhatnagar D."/>
            <person name="Bennett J.W."/>
            <person name="Dean R."/>
            <person name="Payne G.A."/>
        </authorList>
    </citation>
    <scope>NUCLEOTIDE SEQUENCE [LARGE SCALE GENOMIC DNA]</scope>
    <source>
        <strain>ATCC 200026 / FGSC A1120 / IAM 13836 / NRRL 3357 / JCM 12722 / SRRC 167</strain>
    </source>
</reference>
<comment type="function">
    <text evidence="1">Endo-1,4-beta-xylanase involved in the hydrolysis of xylan, a major structural heterogeneous polysaccharide found in plant biomass representing the second most abundant polysaccharide in the biosphere, after cellulose.</text>
</comment>
<comment type="catalytic activity">
    <reaction>
        <text>Endohydrolysis of (1-&gt;4)-beta-D-xylosidic linkages in xylans.</text>
        <dbReference type="EC" id="3.2.1.8"/>
    </reaction>
</comment>
<comment type="pathway">
    <text>Glycan degradation; xylan degradation.</text>
</comment>
<comment type="subcellular location">
    <subcellularLocation>
        <location evidence="1">Secreted</location>
    </subcellularLocation>
</comment>
<comment type="similarity">
    <text evidence="5">Belongs to the glycosyl hydrolase 11 (cellulase G) family.</text>
</comment>